<sequence>MKAIEVDVFGLVQGVGFRWFAQRTAQQHNIVGWVSNQTDGSVKIHAQGSQSDLIDFLSVLEKGPGFYSRVDKVITTNIPLFETNDFAIRG</sequence>
<evidence type="ECO:0000255" key="1">
    <source>
        <dbReference type="PROSITE-ProRule" id="PRU00520"/>
    </source>
</evidence>
<evidence type="ECO:0000305" key="2"/>
<accession>Q03VF5</accession>
<name>ACYP_LEUMM</name>
<proteinExistence type="inferred from homology"/>
<gene>
    <name type="primary">acyP</name>
    <name type="ordered locus">LEUM_1730</name>
</gene>
<keyword id="KW-0378">Hydrolase</keyword>
<keyword id="KW-1185">Reference proteome</keyword>
<comment type="catalytic activity">
    <reaction>
        <text>an acyl phosphate + H2O = a carboxylate + phosphate + H(+)</text>
        <dbReference type="Rhea" id="RHEA:14965"/>
        <dbReference type="ChEBI" id="CHEBI:15377"/>
        <dbReference type="ChEBI" id="CHEBI:15378"/>
        <dbReference type="ChEBI" id="CHEBI:29067"/>
        <dbReference type="ChEBI" id="CHEBI:43474"/>
        <dbReference type="ChEBI" id="CHEBI:59918"/>
        <dbReference type="EC" id="3.6.1.7"/>
    </reaction>
</comment>
<comment type="similarity">
    <text evidence="2">Belongs to the acylphosphatase family.</text>
</comment>
<organism>
    <name type="scientific">Leuconostoc mesenteroides subsp. mesenteroides (strain ATCC 8293 / DSM 20343 / BCRC 11652 / CCM 1803 / JCM 6124 / NCDO 523 / NBRC 100496 / NCIMB 8023 / NCTC 12954 / NRRL B-1118 / 37Y)</name>
    <dbReference type="NCBI Taxonomy" id="203120"/>
    <lineage>
        <taxon>Bacteria</taxon>
        <taxon>Bacillati</taxon>
        <taxon>Bacillota</taxon>
        <taxon>Bacilli</taxon>
        <taxon>Lactobacillales</taxon>
        <taxon>Lactobacillaceae</taxon>
        <taxon>Leuconostoc</taxon>
    </lineage>
</organism>
<reference key="1">
    <citation type="journal article" date="2006" name="Proc. Natl. Acad. Sci. U.S.A.">
        <title>Comparative genomics of the lactic acid bacteria.</title>
        <authorList>
            <person name="Makarova K.S."/>
            <person name="Slesarev A."/>
            <person name="Wolf Y.I."/>
            <person name="Sorokin A."/>
            <person name="Mirkin B."/>
            <person name="Koonin E.V."/>
            <person name="Pavlov A."/>
            <person name="Pavlova N."/>
            <person name="Karamychev V."/>
            <person name="Polouchine N."/>
            <person name="Shakhova V."/>
            <person name="Grigoriev I."/>
            <person name="Lou Y."/>
            <person name="Rohksar D."/>
            <person name="Lucas S."/>
            <person name="Huang K."/>
            <person name="Goodstein D.M."/>
            <person name="Hawkins T."/>
            <person name="Plengvidhya V."/>
            <person name="Welker D."/>
            <person name="Hughes J."/>
            <person name="Goh Y."/>
            <person name="Benson A."/>
            <person name="Baldwin K."/>
            <person name="Lee J.-H."/>
            <person name="Diaz-Muniz I."/>
            <person name="Dosti B."/>
            <person name="Smeianov V."/>
            <person name="Wechter W."/>
            <person name="Barabote R."/>
            <person name="Lorca G."/>
            <person name="Altermann E."/>
            <person name="Barrangou R."/>
            <person name="Ganesan B."/>
            <person name="Xie Y."/>
            <person name="Rawsthorne H."/>
            <person name="Tamir D."/>
            <person name="Parker C."/>
            <person name="Breidt F."/>
            <person name="Broadbent J.R."/>
            <person name="Hutkins R."/>
            <person name="O'Sullivan D."/>
            <person name="Steele J."/>
            <person name="Unlu G."/>
            <person name="Saier M.H. Jr."/>
            <person name="Klaenhammer T."/>
            <person name="Richardson P."/>
            <person name="Kozyavkin S."/>
            <person name="Weimer B.C."/>
            <person name="Mills D.A."/>
        </authorList>
    </citation>
    <scope>NUCLEOTIDE SEQUENCE [LARGE SCALE GENOMIC DNA]</scope>
    <source>
        <strain>ATCC 8293 / DSM 20343 / BCRC 11652 / CCM 1803 / JCM 6124 / NCDO 523 / NBRC 100496 / NCIMB 8023 / NCTC 12954 / NRRL B-1118 / 37Y</strain>
    </source>
</reference>
<protein>
    <recommendedName>
        <fullName>Acylphosphatase</fullName>
        <ecNumber>3.6.1.7</ecNumber>
    </recommendedName>
    <alternativeName>
        <fullName>Acylphosphate phosphohydrolase</fullName>
    </alternativeName>
</protein>
<feature type="chain" id="PRO_0000326738" description="Acylphosphatase">
    <location>
        <begin position="1"/>
        <end position="90"/>
    </location>
</feature>
<feature type="domain" description="Acylphosphatase-like" evidence="1">
    <location>
        <begin position="3"/>
        <end position="90"/>
    </location>
</feature>
<feature type="active site" evidence="1">
    <location>
        <position position="18"/>
    </location>
</feature>
<feature type="active site" evidence="1">
    <location>
        <position position="36"/>
    </location>
</feature>
<dbReference type="EC" id="3.6.1.7"/>
<dbReference type="EMBL" id="CP000414">
    <property type="protein sequence ID" value="ABJ62817.1"/>
    <property type="molecule type" value="Genomic_DNA"/>
</dbReference>
<dbReference type="RefSeq" id="WP_010289909.1">
    <property type="nucleotide sequence ID" value="NC_008531.1"/>
</dbReference>
<dbReference type="SMR" id="Q03VF5"/>
<dbReference type="EnsemblBacteria" id="ABJ62817">
    <property type="protein sequence ID" value="ABJ62817"/>
    <property type="gene ID" value="LEUM_1730"/>
</dbReference>
<dbReference type="GeneID" id="29577297"/>
<dbReference type="KEGG" id="lme:LEUM_1730"/>
<dbReference type="eggNOG" id="COG1254">
    <property type="taxonomic scope" value="Bacteria"/>
</dbReference>
<dbReference type="HOGENOM" id="CLU_141932_2_0_9"/>
<dbReference type="Proteomes" id="UP000000362">
    <property type="component" value="Chromosome"/>
</dbReference>
<dbReference type="GO" id="GO:0003998">
    <property type="term" value="F:acylphosphatase activity"/>
    <property type="evidence" value="ECO:0007669"/>
    <property type="project" value="UniProtKB-EC"/>
</dbReference>
<dbReference type="Gene3D" id="3.30.70.100">
    <property type="match status" value="1"/>
</dbReference>
<dbReference type="InterPro" id="IPR020456">
    <property type="entry name" value="Acylphosphatase"/>
</dbReference>
<dbReference type="InterPro" id="IPR001792">
    <property type="entry name" value="Acylphosphatase-like_dom"/>
</dbReference>
<dbReference type="InterPro" id="IPR036046">
    <property type="entry name" value="Acylphosphatase-like_dom_sf"/>
</dbReference>
<dbReference type="InterPro" id="IPR017968">
    <property type="entry name" value="Acylphosphatase_CS"/>
</dbReference>
<dbReference type="PANTHER" id="PTHR47268">
    <property type="entry name" value="ACYLPHOSPHATASE"/>
    <property type="match status" value="1"/>
</dbReference>
<dbReference type="PANTHER" id="PTHR47268:SF4">
    <property type="entry name" value="ACYLPHOSPHATASE"/>
    <property type="match status" value="1"/>
</dbReference>
<dbReference type="Pfam" id="PF00708">
    <property type="entry name" value="Acylphosphatase"/>
    <property type="match status" value="1"/>
</dbReference>
<dbReference type="PRINTS" id="PR00112">
    <property type="entry name" value="ACYLPHPHTASE"/>
</dbReference>
<dbReference type="SUPFAM" id="SSF54975">
    <property type="entry name" value="Acylphosphatase/BLUF domain-like"/>
    <property type="match status" value="1"/>
</dbReference>
<dbReference type="PROSITE" id="PS00150">
    <property type="entry name" value="ACYLPHOSPHATASE_1"/>
    <property type="match status" value="1"/>
</dbReference>
<dbReference type="PROSITE" id="PS51160">
    <property type="entry name" value="ACYLPHOSPHATASE_3"/>
    <property type="match status" value="1"/>
</dbReference>